<accession>O86385</accession>
<name>OTC_NEIFV</name>
<sequence>DQGAGVTYLEPSASQIGHKESIKDTARVLGRMYDGIEYRGFGQDVVEELAKYAGVPVFNGLTNEFHPTQMFADALTMREHSGKPLNQTAFAYVGDARYNMANSLLVLGAKLGMDVRIGAPKTLWPSENIVARARAVAEETGGKILLTENAEEAVKGADFIHTDVWVSMGEPKEAWQERIDLLKDYRVTPELMAASGNPQVKFMHCLPAFHNRETKVGEWIYETFGLNGVEVT</sequence>
<comment type="function">
    <text evidence="1">Reversibly catalyzes the transfer of the carbamoyl group from carbamoyl phosphate (CP) to the N(epsilon) atom of ornithine (ORN) to produce L-citrulline.</text>
</comment>
<comment type="catalytic activity">
    <reaction>
        <text>carbamoyl phosphate + L-ornithine = L-citrulline + phosphate + H(+)</text>
        <dbReference type="Rhea" id="RHEA:19513"/>
        <dbReference type="ChEBI" id="CHEBI:15378"/>
        <dbReference type="ChEBI" id="CHEBI:43474"/>
        <dbReference type="ChEBI" id="CHEBI:46911"/>
        <dbReference type="ChEBI" id="CHEBI:57743"/>
        <dbReference type="ChEBI" id="CHEBI:58228"/>
        <dbReference type="EC" id="2.1.3.3"/>
    </reaction>
</comment>
<comment type="pathway">
    <text>Amino-acid biosynthesis; L-arginine biosynthesis; L-arginine from L-ornithine and carbamoyl phosphate: step 1/3.</text>
</comment>
<comment type="subcellular location">
    <subcellularLocation>
        <location evidence="1">Cytoplasm</location>
    </subcellularLocation>
</comment>
<comment type="similarity">
    <text evidence="2">Belongs to the aspartate/ornithine carbamoyltransferase superfamily. OTCase family.</text>
</comment>
<proteinExistence type="inferred from homology"/>
<reference key="1">
    <citation type="journal article" date="1999" name="Mol. Biol. Evol.">
        <title>Networks and groups within the genus Neisseria: analysis of argF, recA, rho, and 16S rRNA sequences from human Neisseria species.</title>
        <authorList>
            <person name="Smith N.H."/>
            <person name="Holmes E.C."/>
            <person name="Donovan G.M."/>
            <person name="Carpenter G.A."/>
            <person name="Spratt B.G."/>
        </authorList>
    </citation>
    <scope>NUCLEOTIDE SEQUENCE [GENOMIC DNA]</scope>
    <source>
        <strain>Bangor 9</strain>
    </source>
</reference>
<gene>
    <name type="primary">argF</name>
</gene>
<protein>
    <recommendedName>
        <fullName>Ornithine carbamoyltransferase</fullName>
        <shortName>OTCase</shortName>
        <ecNumber>2.1.3.3</ecNumber>
    </recommendedName>
</protein>
<dbReference type="EC" id="2.1.3.3"/>
<dbReference type="EMBL" id="AJ223894">
    <property type="protein sequence ID" value="CAA11625.1"/>
    <property type="molecule type" value="Genomic_DNA"/>
</dbReference>
<dbReference type="SMR" id="O86385"/>
<dbReference type="UniPathway" id="UPA00068">
    <property type="reaction ID" value="UER00112"/>
</dbReference>
<dbReference type="GO" id="GO:0005737">
    <property type="term" value="C:cytoplasm"/>
    <property type="evidence" value="ECO:0007669"/>
    <property type="project" value="UniProtKB-SubCell"/>
</dbReference>
<dbReference type="GO" id="GO:0016597">
    <property type="term" value="F:amino acid binding"/>
    <property type="evidence" value="ECO:0007669"/>
    <property type="project" value="InterPro"/>
</dbReference>
<dbReference type="GO" id="GO:0004585">
    <property type="term" value="F:ornithine carbamoyltransferase activity"/>
    <property type="evidence" value="ECO:0007669"/>
    <property type="project" value="UniProtKB-EC"/>
</dbReference>
<dbReference type="GO" id="GO:0042450">
    <property type="term" value="P:arginine biosynthetic process via ornithine"/>
    <property type="evidence" value="ECO:0007669"/>
    <property type="project" value="TreeGrafter"/>
</dbReference>
<dbReference type="GO" id="GO:0019240">
    <property type="term" value="P:citrulline biosynthetic process"/>
    <property type="evidence" value="ECO:0007669"/>
    <property type="project" value="TreeGrafter"/>
</dbReference>
<dbReference type="GO" id="GO:0006526">
    <property type="term" value="P:L-arginine biosynthetic process"/>
    <property type="evidence" value="ECO:0007669"/>
    <property type="project" value="UniProtKB-UniPathway"/>
</dbReference>
<dbReference type="FunFam" id="3.40.50.1370:FF:000008">
    <property type="entry name" value="Ornithine carbamoyltransferase"/>
    <property type="match status" value="1"/>
</dbReference>
<dbReference type="Gene3D" id="3.40.50.1370">
    <property type="entry name" value="Aspartate/ornithine carbamoyltransferase"/>
    <property type="match status" value="2"/>
</dbReference>
<dbReference type="InterPro" id="IPR006132">
    <property type="entry name" value="Asp/Orn_carbamoyltranf_P-bd"/>
</dbReference>
<dbReference type="InterPro" id="IPR036901">
    <property type="entry name" value="Asp/Orn_carbamoylTrfase_sf"/>
</dbReference>
<dbReference type="InterPro" id="IPR006131">
    <property type="entry name" value="Asp_carbamoyltransf_Asp/Orn-bd"/>
</dbReference>
<dbReference type="InterPro" id="IPR002292">
    <property type="entry name" value="Orn/put_carbamltrans"/>
</dbReference>
<dbReference type="NCBIfam" id="TIGR00658">
    <property type="entry name" value="orni_carb_tr"/>
    <property type="match status" value="1"/>
</dbReference>
<dbReference type="PANTHER" id="PTHR45753:SF2">
    <property type="entry name" value="ORNITHINE CARBAMOYLTRANSFERASE"/>
    <property type="match status" value="1"/>
</dbReference>
<dbReference type="PANTHER" id="PTHR45753">
    <property type="entry name" value="ORNITHINE CARBAMOYLTRANSFERASE, MITOCHONDRIAL"/>
    <property type="match status" value="1"/>
</dbReference>
<dbReference type="Pfam" id="PF00185">
    <property type="entry name" value="OTCace"/>
    <property type="match status" value="1"/>
</dbReference>
<dbReference type="Pfam" id="PF02729">
    <property type="entry name" value="OTCace_N"/>
    <property type="match status" value="1"/>
</dbReference>
<dbReference type="PRINTS" id="PR00102">
    <property type="entry name" value="OTCASE"/>
</dbReference>
<dbReference type="SUPFAM" id="SSF53671">
    <property type="entry name" value="Aspartate/ornithine carbamoyltransferase"/>
    <property type="match status" value="1"/>
</dbReference>
<evidence type="ECO:0000250" key="1"/>
<evidence type="ECO:0000305" key="2"/>
<feature type="chain" id="PRO_0000112961" description="Ornithine carbamoyltransferase">
    <location>
        <begin position="1" status="less than"/>
        <end position="232" status="greater than"/>
    </location>
</feature>
<feature type="binding site" evidence="1">
    <location>
        <position position="15"/>
    </location>
    <ligand>
        <name>carbamoyl phosphate</name>
        <dbReference type="ChEBI" id="CHEBI:58228"/>
    </ligand>
</feature>
<feature type="binding site" evidence="1">
    <location>
        <position position="39"/>
    </location>
    <ligand>
        <name>carbamoyl phosphate</name>
        <dbReference type="ChEBI" id="CHEBI:58228"/>
    </ligand>
</feature>
<feature type="binding site" evidence="1">
    <location>
        <begin position="66"/>
        <end position="69"/>
    </location>
    <ligand>
        <name>carbamoyl phosphate</name>
        <dbReference type="ChEBI" id="CHEBI:58228"/>
    </ligand>
</feature>
<feature type="binding site" evidence="1">
    <location>
        <position position="99"/>
    </location>
    <ligand>
        <name>L-ornithine</name>
        <dbReference type="ChEBI" id="CHEBI:46911"/>
    </ligand>
</feature>
<feature type="binding site" evidence="1">
    <location>
        <position position="163"/>
    </location>
    <ligand>
        <name>L-ornithine</name>
        <dbReference type="ChEBI" id="CHEBI:46911"/>
    </ligand>
</feature>
<feature type="binding site" evidence="1">
    <location>
        <begin position="167"/>
        <end position="168"/>
    </location>
    <ligand>
        <name>L-ornithine</name>
        <dbReference type="ChEBI" id="CHEBI:46911"/>
    </ligand>
</feature>
<feature type="binding site" evidence="1">
    <location>
        <begin position="204"/>
        <end position="207"/>
    </location>
    <ligand>
        <name>carbamoyl phosphate</name>
        <dbReference type="ChEBI" id="CHEBI:58228"/>
    </ligand>
</feature>
<feature type="binding site" evidence="1">
    <location>
        <position position="232"/>
    </location>
    <ligand>
        <name>carbamoyl phosphate</name>
        <dbReference type="ChEBI" id="CHEBI:58228"/>
    </ligand>
</feature>
<feature type="site" description="Important for structural integrity" evidence="1">
    <location>
        <position position="79"/>
    </location>
</feature>
<feature type="non-terminal residue">
    <location>
        <position position="1"/>
    </location>
</feature>
<feature type="non-terminal residue">
    <location>
        <position position="232"/>
    </location>
</feature>
<organism>
    <name type="scientific">Neisseria flava</name>
    <dbReference type="NCBI Taxonomy" id="34026"/>
    <lineage>
        <taxon>Bacteria</taxon>
        <taxon>Pseudomonadati</taxon>
        <taxon>Pseudomonadota</taxon>
        <taxon>Betaproteobacteria</taxon>
        <taxon>Neisseriales</taxon>
        <taxon>Neisseriaceae</taxon>
        <taxon>Neisseria</taxon>
    </lineage>
</organism>
<keyword id="KW-0028">Amino-acid biosynthesis</keyword>
<keyword id="KW-0055">Arginine biosynthesis</keyword>
<keyword id="KW-0963">Cytoplasm</keyword>
<keyword id="KW-0808">Transferase</keyword>